<comment type="function">
    <text evidence="1">Recognizes and binds the 7-methylguanosine-containing mRNA cap during an early step in the initiation of protein synthesis. May act as an inhibitor of EIF4E1 activity (By similarity).</text>
</comment>
<comment type="subunit">
    <text evidence="1">eIF4F is a multi-subunit complex, the composition of which varies with external and internal environmental conditions. It is composed of at least eIF4A, eIF4E and eIF4G (By similarity). EIF4E3 interacts with EIF4G1, but not with EIF4EBP1, EIF4EBP2 and EIF4EBP3 (By similarity).</text>
</comment>
<comment type="interaction">
    <interactant intactId="EBI-17933598">
        <id>Q8N5X7-2</id>
    </interactant>
    <interactant intactId="EBI-7451846">
        <id>Q16613</id>
        <label>AANAT</label>
    </interactant>
    <organismsDiffer>false</organismsDiffer>
    <experiments>3</experiments>
</comment>
<comment type="alternative products">
    <event type="alternative splicing"/>
    <isoform>
        <id>Q8N5X7-1</id>
        <name>1</name>
        <sequence type="displayed"/>
    </isoform>
    <isoform>
        <id>Q8N5X7-2</id>
        <name>2</name>
        <sequence type="described" ref="VSP_025602"/>
    </isoform>
</comment>
<comment type="similarity">
    <text evidence="5">Belongs to the eukaryotic initiation factor 4E family.</text>
</comment>
<reference key="1">
    <citation type="journal article" date="2004" name="Nat. Genet.">
        <title>Complete sequencing and characterization of 21,243 full-length human cDNAs.</title>
        <authorList>
            <person name="Ota T."/>
            <person name="Suzuki Y."/>
            <person name="Nishikawa T."/>
            <person name="Otsuki T."/>
            <person name="Sugiyama T."/>
            <person name="Irie R."/>
            <person name="Wakamatsu A."/>
            <person name="Hayashi K."/>
            <person name="Sato H."/>
            <person name="Nagai K."/>
            <person name="Kimura K."/>
            <person name="Makita H."/>
            <person name="Sekine M."/>
            <person name="Obayashi M."/>
            <person name="Nishi T."/>
            <person name="Shibahara T."/>
            <person name="Tanaka T."/>
            <person name="Ishii S."/>
            <person name="Yamamoto J."/>
            <person name="Saito K."/>
            <person name="Kawai Y."/>
            <person name="Isono Y."/>
            <person name="Nakamura Y."/>
            <person name="Nagahari K."/>
            <person name="Murakami K."/>
            <person name="Yasuda T."/>
            <person name="Iwayanagi T."/>
            <person name="Wagatsuma M."/>
            <person name="Shiratori A."/>
            <person name="Sudo H."/>
            <person name="Hosoiri T."/>
            <person name="Kaku Y."/>
            <person name="Kodaira H."/>
            <person name="Kondo H."/>
            <person name="Sugawara M."/>
            <person name="Takahashi M."/>
            <person name="Kanda K."/>
            <person name="Yokoi T."/>
            <person name="Furuya T."/>
            <person name="Kikkawa E."/>
            <person name="Omura Y."/>
            <person name="Abe K."/>
            <person name="Kamihara K."/>
            <person name="Katsuta N."/>
            <person name="Sato K."/>
            <person name="Tanikawa M."/>
            <person name="Yamazaki M."/>
            <person name="Ninomiya K."/>
            <person name="Ishibashi T."/>
            <person name="Yamashita H."/>
            <person name="Murakawa K."/>
            <person name="Fujimori K."/>
            <person name="Tanai H."/>
            <person name="Kimata M."/>
            <person name="Watanabe M."/>
            <person name="Hiraoka S."/>
            <person name="Chiba Y."/>
            <person name="Ishida S."/>
            <person name="Ono Y."/>
            <person name="Takiguchi S."/>
            <person name="Watanabe S."/>
            <person name="Yosida M."/>
            <person name="Hotuta T."/>
            <person name="Kusano J."/>
            <person name="Kanehori K."/>
            <person name="Takahashi-Fujii A."/>
            <person name="Hara H."/>
            <person name="Tanase T.-O."/>
            <person name="Nomura Y."/>
            <person name="Togiya S."/>
            <person name="Komai F."/>
            <person name="Hara R."/>
            <person name="Takeuchi K."/>
            <person name="Arita M."/>
            <person name="Imose N."/>
            <person name="Musashino K."/>
            <person name="Yuuki H."/>
            <person name="Oshima A."/>
            <person name="Sasaki N."/>
            <person name="Aotsuka S."/>
            <person name="Yoshikawa Y."/>
            <person name="Matsunawa H."/>
            <person name="Ichihara T."/>
            <person name="Shiohata N."/>
            <person name="Sano S."/>
            <person name="Moriya S."/>
            <person name="Momiyama H."/>
            <person name="Satoh N."/>
            <person name="Takami S."/>
            <person name="Terashima Y."/>
            <person name="Suzuki O."/>
            <person name="Nakagawa S."/>
            <person name="Senoh A."/>
            <person name="Mizoguchi H."/>
            <person name="Goto Y."/>
            <person name="Shimizu F."/>
            <person name="Wakebe H."/>
            <person name="Hishigaki H."/>
            <person name="Watanabe T."/>
            <person name="Sugiyama A."/>
            <person name="Takemoto M."/>
            <person name="Kawakami B."/>
            <person name="Yamazaki M."/>
            <person name="Watanabe K."/>
            <person name="Kumagai A."/>
            <person name="Itakura S."/>
            <person name="Fukuzumi Y."/>
            <person name="Fujimori Y."/>
            <person name="Komiyama M."/>
            <person name="Tashiro H."/>
            <person name="Tanigami A."/>
            <person name="Fujiwara T."/>
            <person name="Ono T."/>
            <person name="Yamada K."/>
            <person name="Fujii Y."/>
            <person name="Ozaki K."/>
            <person name="Hirao M."/>
            <person name="Ohmori Y."/>
            <person name="Kawabata A."/>
            <person name="Hikiji T."/>
            <person name="Kobatake N."/>
            <person name="Inagaki H."/>
            <person name="Ikema Y."/>
            <person name="Okamoto S."/>
            <person name="Okitani R."/>
            <person name="Kawakami T."/>
            <person name="Noguchi S."/>
            <person name="Itoh T."/>
            <person name="Shigeta K."/>
            <person name="Senba T."/>
            <person name="Matsumura K."/>
            <person name="Nakajima Y."/>
            <person name="Mizuno T."/>
            <person name="Morinaga M."/>
            <person name="Sasaki M."/>
            <person name="Togashi T."/>
            <person name="Oyama M."/>
            <person name="Hata H."/>
            <person name="Watanabe M."/>
            <person name="Komatsu T."/>
            <person name="Mizushima-Sugano J."/>
            <person name="Satoh T."/>
            <person name="Shirai Y."/>
            <person name="Takahashi Y."/>
            <person name="Nakagawa K."/>
            <person name="Okumura K."/>
            <person name="Nagase T."/>
            <person name="Nomura N."/>
            <person name="Kikuchi H."/>
            <person name="Masuho Y."/>
            <person name="Yamashita R."/>
            <person name="Nakai K."/>
            <person name="Yada T."/>
            <person name="Nakamura Y."/>
            <person name="Ohara O."/>
            <person name="Isogai T."/>
            <person name="Sugano S."/>
        </authorList>
    </citation>
    <scope>NUCLEOTIDE SEQUENCE [LARGE SCALE MRNA] (ISOFORM 2)</scope>
    <source>
        <tissue>Brain</tissue>
        <tissue>Cerebellum</tissue>
    </source>
</reference>
<reference key="2">
    <citation type="journal article" date="2006" name="Nature">
        <title>The DNA sequence, annotation and analysis of human chromosome 3.</title>
        <authorList>
            <person name="Muzny D.M."/>
            <person name="Scherer S.E."/>
            <person name="Kaul R."/>
            <person name="Wang J."/>
            <person name="Yu J."/>
            <person name="Sudbrak R."/>
            <person name="Buhay C.J."/>
            <person name="Chen R."/>
            <person name="Cree A."/>
            <person name="Ding Y."/>
            <person name="Dugan-Rocha S."/>
            <person name="Gill R."/>
            <person name="Gunaratne P."/>
            <person name="Harris R.A."/>
            <person name="Hawes A.C."/>
            <person name="Hernandez J."/>
            <person name="Hodgson A.V."/>
            <person name="Hume J."/>
            <person name="Jackson A."/>
            <person name="Khan Z.M."/>
            <person name="Kovar-Smith C."/>
            <person name="Lewis L.R."/>
            <person name="Lozado R.J."/>
            <person name="Metzker M.L."/>
            <person name="Milosavljevic A."/>
            <person name="Miner G.R."/>
            <person name="Morgan M.B."/>
            <person name="Nazareth L.V."/>
            <person name="Scott G."/>
            <person name="Sodergren E."/>
            <person name="Song X.-Z."/>
            <person name="Steffen D."/>
            <person name="Wei S."/>
            <person name="Wheeler D.A."/>
            <person name="Wright M.W."/>
            <person name="Worley K.C."/>
            <person name="Yuan Y."/>
            <person name="Zhang Z."/>
            <person name="Adams C.Q."/>
            <person name="Ansari-Lari M.A."/>
            <person name="Ayele M."/>
            <person name="Brown M.J."/>
            <person name="Chen G."/>
            <person name="Chen Z."/>
            <person name="Clendenning J."/>
            <person name="Clerc-Blankenburg K.P."/>
            <person name="Chen R."/>
            <person name="Chen Z."/>
            <person name="Davis C."/>
            <person name="Delgado O."/>
            <person name="Dinh H.H."/>
            <person name="Dong W."/>
            <person name="Draper H."/>
            <person name="Ernst S."/>
            <person name="Fu G."/>
            <person name="Gonzalez-Garay M.L."/>
            <person name="Garcia D.K."/>
            <person name="Gillett W."/>
            <person name="Gu J."/>
            <person name="Hao B."/>
            <person name="Haugen E."/>
            <person name="Havlak P."/>
            <person name="He X."/>
            <person name="Hennig S."/>
            <person name="Hu S."/>
            <person name="Huang W."/>
            <person name="Jackson L.R."/>
            <person name="Jacob L.S."/>
            <person name="Kelly S.H."/>
            <person name="Kube M."/>
            <person name="Levy R."/>
            <person name="Li Z."/>
            <person name="Liu B."/>
            <person name="Liu J."/>
            <person name="Liu W."/>
            <person name="Lu J."/>
            <person name="Maheshwari M."/>
            <person name="Nguyen B.-V."/>
            <person name="Okwuonu G.O."/>
            <person name="Palmeiri A."/>
            <person name="Pasternak S."/>
            <person name="Perez L.M."/>
            <person name="Phelps K.A."/>
            <person name="Plopper F.J."/>
            <person name="Qiang B."/>
            <person name="Raymond C."/>
            <person name="Rodriguez R."/>
            <person name="Saenphimmachak C."/>
            <person name="Santibanez J."/>
            <person name="Shen H."/>
            <person name="Shen Y."/>
            <person name="Subramanian S."/>
            <person name="Tabor P.E."/>
            <person name="Verduzco D."/>
            <person name="Waldron L."/>
            <person name="Wang J."/>
            <person name="Wang J."/>
            <person name="Wang Q."/>
            <person name="Williams G.A."/>
            <person name="Wong G.K.-S."/>
            <person name="Yao Z."/>
            <person name="Zhang J."/>
            <person name="Zhang X."/>
            <person name="Zhao G."/>
            <person name="Zhou J."/>
            <person name="Zhou Y."/>
            <person name="Nelson D."/>
            <person name="Lehrach H."/>
            <person name="Reinhardt R."/>
            <person name="Naylor S.L."/>
            <person name="Yang H."/>
            <person name="Olson M."/>
            <person name="Weinstock G."/>
            <person name="Gibbs R.A."/>
        </authorList>
    </citation>
    <scope>NUCLEOTIDE SEQUENCE [LARGE SCALE GENOMIC DNA]</scope>
</reference>
<reference key="3">
    <citation type="journal article" date="2004" name="Genome Res.">
        <title>The status, quality, and expansion of the NIH full-length cDNA project: the Mammalian Gene Collection (MGC).</title>
        <authorList>
            <consortium name="The MGC Project Team"/>
        </authorList>
    </citation>
    <scope>NUCLEOTIDE SEQUENCE [LARGE SCALE MRNA] (ISOFORM 2)</scope>
    <scope>NUCLEOTIDE SEQUENCE [LARGE SCALE MRNA] OF 60-224 (ISOFORM 1)</scope>
    <source>
        <tissue>Brain</tissue>
    </source>
</reference>
<accession>Q8N5X7</accession>
<accession>B2R963</accession>
<accession>Q6NUT1</accession>
<gene>
    <name type="primary">EIF4E3</name>
</gene>
<protein>
    <recommendedName>
        <fullName>Eukaryotic translation initiation factor 4E type 3</fullName>
        <shortName>eIF-4E type 3</shortName>
        <shortName>eIF-4E3</shortName>
        <shortName>eIF4E type 3</shortName>
        <shortName>eIF4E-3</shortName>
    </recommendedName>
</protein>
<name>IF4E3_HUMAN</name>
<organism>
    <name type="scientific">Homo sapiens</name>
    <name type="common">Human</name>
    <dbReference type="NCBI Taxonomy" id="9606"/>
    <lineage>
        <taxon>Eukaryota</taxon>
        <taxon>Metazoa</taxon>
        <taxon>Chordata</taxon>
        <taxon>Craniata</taxon>
        <taxon>Vertebrata</taxon>
        <taxon>Euteleostomi</taxon>
        <taxon>Mammalia</taxon>
        <taxon>Eutheria</taxon>
        <taxon>Euarchontoglires</taxon>
        <taxon>Primates</taxon>
        <taxon>Haplorrhini</taxon>
        <taxon>Catarrhini</taxon>
        <taxon>Hominidae</taxon>
        <taxon>Homo</taxon>
    </lineage>
</organism>
<dbReference type="EMBL" id="AK126999">
    <property type="protein sequence ID" value="BAG54418.1"/>
    <property type="molecule type" value="mRNA"/>
</dbReference>
<dbReference type="EMBL" id="AK313656">
    <property type="protein sequence ID" value="BAG36410.1"/>
    <property type="molecule type" value="mRNA"/>
</dbReference>
<dbReference type="EMBL" id="AC134770">
    <property type="status" value="NOT_ANNOTATED_CDS"/>
    <property type="molecule type" value="Genomic_DNA"/>
</dbReference>
<dbReference type="EMBL" id="BC031289">
    <property type="protein sequence ID" value="AAH31289.3"/>
    <property type="molecule type" value="mRNA"/>
</dbReference>
<dbReference type="EMBL" id="BC068443">
    <property type="protein sequence ID" value="AAH68443.1"/>
    <property type="molecule type" value="mRNA"/>
</dbReference>
<dbReference type="CCDS" id="CCDS33786.1">
    <molecule id="Q8N5X7-2"/>
</dbReference>
<dbReference type="CCDS" id="CCDS46867.1">
    <molecule id="Q8N5X7-1"/>
</dbReference>
<dbReference type="RefSeq" id="NP_001128121.1">
    <molecule id="Q8N5X7-2"/>
    <property type="nucleotide sequence ID" value="NM_001134649.3"/>
</dbReference>
<dbReference type="RefSeq" id="NP_001128122.1">
    <molecule id="Q8N5X7-2"/>
    <property type="nucleotide sequence ID" value="NM_001134650.1"/>
</dbReference>
<dbReference type="RefSeq" id="NP_001128123.1">
    <molecule id="Q8N5X7-1"/>
    <property type="nucleotide sequence ID" value="NM_001134651.2"/>
</dbReference>
<dbReference type="RefSeq" id="NP_001269815.1">
    <molecule id="Q8N5X7-2"/>
    <property type="nucleotide sequence ID" value="NM_001282886.2"/>
</dbReference>
<dbReference type="RefSeq" id="NP_775495.1">
    <molecule id="Q8N5X7-2"/>
    <property type="nucleotide sequence ID" value="NM_173359.5"/>
</dbReference>
<dbReference type="RefSeq" id="XP_016861767.1">
    <property type="nucleotide sequence ID" value="XM_017006278.1"/>
</dbReference>
<dbReference type="RefSeq" id="XP_016861768.1">
    <property type="nucleotide sequence ID" value="XM_017006279.1"/>
</dbReference>
<dbReference type="RefSeq" id="XP_016861769.1">
    <property type="nucleotide sequence ID" value="XM_017006280.1"/>
</dbReference>
<dbReference type="RefSeq" id="XP_016861770.1">
    <property type="nucleotide sequence ID" value="XM_017006281.1"/>
</dbReference>
<dbReference type="RefSeq" id="XP_016861771.1">
    <property type="nucleotide sequence ID" value="XM_017006282.1"/>
</dbReference>
<dbReference type="RefSeq" id="XP_047304018.1">
    <molecule id="Q8N5X7-2"/>
    <property type="nucleotide sequence ID" value="XM_047448062.1"/>
</dbReference>
<dbReference type="RefSeq" id="XP_047304019.1">
    <molecule id="Q8N5X7-2"/>
    <property type="nucleotide sequence ID" value="XM_047448063.1"/>
</dbReference>
<dbReference type="RefSeq" id="XP_047304020.1">
    <molecule id="Q8N5X7-2"/>
    <property type="nucleotide sequence ID" value="XM_047448064.1"/>
</dbReference>
<dbReference type="RefSeq" id="XP_054202380.1">
    <molecule id="Q8N5X7-2"/>
    <property type="nucleotide sequence ID" value="XM_054346405.1"/>
</dbReference>
<dbReference type="RefSeq" id="XP_054202381.1">
    <molecule id="Q8N5X7-2"/>
    <property type="nucleotide sequence ID" value="XM_054346406.1"/>
</dbReference>
<dbReference type="SMR" id="Q8N5X7"/>
<dbReference type="BioGRID" id="130428">
    <property type="interactions" value="12"/>
</dbReference>
<dbReference type="FunCoup" id="Q8N5X7">
    <property type="interactions" value="82"/>
</dbReference>
<dbReference type="IntAct" id="Q8N5X7">
    <property type="interactions" value="8"/>
</dbReference>
<dbReference type="MINT" id="Q8N5X7"/>
<dbReference type="STRING" id="9606.ENSP00000393324"/>
<dbReference type="iPTMnet" id="Q8N5X7"/>
<dbReference type="PhosphoSitePlus" id="Q8N5X7"/>
<dbReference type="BioMuta" id="EIF4E3"/>
<dbReference type="DMDM" id="156633293"/>
<dbReference type="jPOST" id="Q8N5X7"/>
<dbReference type="MassIVE" id="Q8N5X7"/>
<dbReference type="PaxDb" id="9606-ENSP00000393324"/>
<dbReference type="PeptideAtlas" id="Q8N5X7"/>
<dbReference type="ProteomicsDB" id="72106">
    <molecule id="Q8N5X7-1"/>
</dbReference>
<dbReference type="ProteomicsDB" id="72107">
    <molecule id="Q8N5X7-2"/>
</dbReference>
<dbReference type="Pumba" id="Q8N5X7"/>
<dbReference type="ABCD" id="Q8N5X7">
    <property type="antibodies" value="5 sequenced antibodies"/>
</dbReference>
<dbReference type="Antibodypedia" id="31921">
    <property type="antibodies" value="122 antibodies from 25 providers"/>
</dbReference>
<dbReference type="DNASU" id="317649"/>
<dbReference type="Ensembl" id="ENST00000295612.7">
    <molecule id="Q8N5X7-2"/>
    <property type="protein sequence ID" value="ENSP00000295612.3"/>
    <property type="gene ID" value="ENSG00000163412.13"/>
</dbReference>
<dbReference type="Ensembl" id="ENST00000389826.7">
    <molecule id="Q8N5X7-2"/>
    <property type="protein sequence ID" value="ENSP00000374476.3"/>
    <property type="gene ID" value="ENSG00000163412.13"/>
</dbReference>
<dbReference type="Ensembl" id="ENST00000421769.6">
    <molecule id="Q8N5X7-2"/>
    <property type="protein sequence ID" value="ENSP00000411762.2"/>
    <property type="gene ID" value="ENSG00000163412.13"/>
</dbReference>
<dbReference type="Ensembl" id="ENST00000425534.8">
    <molecule id="Q8N5X7-1"/>
    <property type="protein sequence ID" value="ENSP00000393324.2"/>
    <property type="gene ID" value="ENSG00000163412.13"/>
</dbReference>
<dbReference type="Ensembl" id="ENST00000448225.5">
    <molecule id="Q8N5X7-2"/>
    <property type="protein sequence ID" value="ENSP00000410350.1"/>
    <property type="gene ID" value="ENSG00000163412.13"/>
</dbReference>
<dbReference type="GeneID" id="317649"/>
<dbReference type="KEGG" id="hsa:317649"/>
<dbReference type="MANE-Select" id="ENST00000425534.8">
    <property type="protein sequence ID" value="ENSP00000393324.2"/>
    <property type="RefSeq nucleotide sequence ID" value="NM_001134651.2"/>
    <property type="RefSeq protein sequence ID" value="NP_001128123.1"/>
</dbReference>
<dbReference type="UCSC" id="uc003dov.5">
    <molecule id="Q8N5X7-1"/>
    <property type="organism name" value="human"/>
</dbReference>
<dbReference type="AGR" id="HGNC:31837"/>
<dbReference type="CTD" id="317649"/>
<dbReference type="DisGeNET" id="317649"/>
<dbReference type="GeneCards" id="EIF4E3"/>
<dbReference type="HGNC" id="HGNC:31837">
    <property type="gene designation" value="EIF4E3"/>
</dbReference>
<dbReference type="HPA" id="ENSG00000163412">
    <property type="expression patterns" value="Low tissue specificity"/>
</dbReference>
<dbReference type="MIM" id="609896">
    <property type="type" value="gene"/>
</dbReference>
<dbReference type="neXtProt" id="NX_Q8N5X7"/>
<dbReference type="OpenTargets" id="ENSG00000163412"/>
<dbReference type="PharmGKB" id="PA134961880"/>
<dbReference type="VEuPathDB" id="HostDB:ENSG00000163412"/>
<dbReference type="eggNOG" id="ENOG502QPP4">
    <property type="taxonomic scope" value="Eukaryota"/>
</dbReference>
<dbReference type="GeneTree" id="ENSGT00940000155865"/>
<dbReference type="HOGENOM" id="CLU_043552_5_1_1"/>
<dbReference type="InParanoid" id="Q8N5X7"/>
<dbReference type="OMA" id="LPLQYHW"/>
<dbReference type="OrthoDB" id="17977at2759"/>
<dbReference type="PAN-GO" id="Q8N5X7">
    <property type="GO annotations" value="3 GO annotations based on evolutionary models"/>
</dbReference>
<dbReference type="PhylomeDB" id="Q8N5X7"/>
<dbReference type="PathwayCommons" id="Q8N5X7"/>
<dbReference type="Reactome" id="R-HSA-1169408">
    <property type="pathway name" value="ISG15 antiviral mechanism"/>
</dbReference>
<dbReference type="SignaLink" id="Q8N5X7"/>
<dbReference type="BioGRID-ORCS" id="317649">
    <property type="hits" value="15 hits in 1146 CRISPR screens"/>
</dbReference>
<dbReference type="ChiTaRS" id="EIF4E3">
    <property type="organism name" value="human"/>
</dbReference>
<dbReference type="GeneWiki" id="EIF4E3"/>
<dbReference type="GenomeRNAi" id="317649"/>
<dbReference type="Pharos" id="Q8N5X7">
    <property type="development level" value="Tbio"/>
</dbReference>
<dbReference type="PRO" id="PR:Q8N5X7"/>
<dbReference type="Proteomes" id="UP000005640">
    <property type="component" value="Chromosome 3"/>
</dbReference>
<dbReference type="RNAct" id="Q8N5X7">
    <property type="molecule type" value="protein"/>
</dbReference>
<dbReference type="Bgee" id="ENSG00000163412">
    <property type="expression patterns" value="Expressed in buccal mucosa cell and 189 other cell types or tissues"/>
</dbReference>
<dbReference type="ExpressionAtlas" id="Q8N5X7">
    <property type="expression patterns" value="baseline and differential"/>
</dbReference>
<dbReference type="GO" id="GO:0005829">
    <property type="term" value="C:cytosol"/>
    <property type="evidence" value="ECO:0000304"/>
    <property type="project" value="Reactome"/>
</dbReference>
<dbReference type="GO" id="GO:0016281">
    <property type="term" value="C:eukaryotic translation initiation factor 4F complex"/>
    <property type="evidence" value="ECO:0000318"/>
    <property type="project" value="GO_Central"/>
</dbReference>
<dbReference type="GO" id="GO:0000340">
    <property type="term" value="F:RNA 7-methylguanosine cap binding"/>
    <property type="evidence" value="ECO:0000318"/>
    <property type="project" value="GO_Central"/>
</dbReference>
<dbReference type="GO" id="GO:0003743">
    <property type="term" value="F:translation initiation factor activity"/>
    <property type="evidence" value="ECO:0000318"/>
    <property type="project" value="GO_Central"/>
</dbReference>
<dbReference type="GO" id="GO:0006417">
    <property type="term" value="P:regulation of translation"/>
    <property type="evidence" value="ECO:0007669"/>
    <property type="project" value="UniProtKB-KW"/>
</dbReference>
<dbReference type="GO" id="GO:0006413">
    <property type="term" value="P:translational initiation"/>
    <property type="evidence" value="ECO:0000318"/>
    <property type="project" value="GO_Central"/>
</dbReference>
<dbReference type="FunFam" id="3.30.760.10:FF:000007">
    <property type="entry name" value="Eukaryotic translation initiation factor 4E family member 3"/>
    <property type="match status" value="1"/>
</dbReference>
<dbReference type="Gene3D" id="3.30.760.10">
    <property type="entry name" value="RNA Cap, Translation Initiation Factor Eif4e"/>
    <property type="match status" value="1"/>
</dbReference>
<dbReference type="InterPro" id="IPR023398">
    <property type="entry name" value="TIF_eIF4e-like"/>
</dbReference>
<dbReference type="InterPro" id="IPR001040">
    <property type="entry name" value="TIF_eIF_4E"/>
</dbReference>
<dbReference type="PANTHER" id="PTHR11960">
    <property type="entry name" value="EUKARYOTIC TRANSLATION INITIATION FACTOR 4E RELATED"/>
    <property type="match status" value="1"/>
</dbReference>
<dbReference type="PANTHER" id="PTHR11960:SF66">
    <property type="entry name" value="EUKARYOTIC TRANSLATION INITIATION FACTOR 4E TYPE 3"/>
    <property type="match status" value="1"/>
</dbReference>
<dbReference type="Pfam" id="PF01652">
    <property type="entry name" value="IF4E"/>
    <property type="match status" value="1"/>
</dbReference>
<dbReference type="SUPFAM" id="SSF55418">
    <property type="entry name" value="eIF4e-like"/>
    <property type="match status" value="1"/>
</dbReference>
<evidence type="ECO:0000250" key="1"/>
<evidence type="ECO:0000256" key="2">
    <source>
        <dbReference type="SAM" id="MobiDB-lite"/>
    </source>
</evidence>
<evidence type="ECO:0000303" key="3">
    <source>
    </source>
</evidence>
<evidence type="ECO:0000303" key="4">
    <source>
    </source>
</evidence>
<evidence type="ECO:0000305" key="5"/>
<feature type="chain" id="PRO_0000287697" description="Eukaryotic translation initiation factor 4E type 3">
    <location>
        <begin position="1"/>
        <end position="224"/>
    </location>
</feature>
<feature type="region of interest" description="Disordered" evidence="2">
    <location>
        <begin position="1"/>
        <end position="28"/>
    </location>
</feature>
<feature type="compositionally biased region" description="Low complexity" evidence="2">
    <location>
        <begin position="1"/>
        <end position="27"/>
    </location>
</feature>
<feature type="binding site" evidence="1">
    <location>
        <begin position="115"/>
        <end position="116"/>
    </location>
    <ligand>
        <name>mRNA</name>
        <dbReference type="ChEBI" id="CHEBI:33699"/>
    </ligand>
    <ligandPart>
        <name>N(7)-methylguanosine 5'-triphosphate group</name>
        <dbReference type="ChEBI" id="CHEBI:74429"/>
        <note>m7GTP residue in mRNA cap</note>
    </ligandPart>
</feature>
<feature type="binding site" evidence="1">
    <location>
        <begin position="169"/>
        <end position="174"/>
    </location>
    <ligand>
        <name>mRNA</name>
        <dbReference type="ChEBI" id="CHEBI:33699"/>
    </ligand>
    <ligandPart>
        <name>N(7)-methylguanosine 5'-triphosphate group</name>
        <dbReference type="ChEBI" id="CHEBI:74429"/>
        <note>m7GTP residue in mRNA cap</note>
    </ligandPart>
</feature>
<feature type="splice variant" id="VSP_025602" description="In isoform 2." evidence="3 4">
    <location>
        <begin position="1"/>
        <end position="106"/>
    </location>
</feature>
<proteinExistence type="evidence at protein level"/>
<keyword id="KW-0025">Alternative splicing</keyword>
<keyword id="KW-0396">Initiation factor</keyword>
<keyword id="KW-0648">Protein biosynthesis</keyword>
<keyword id="KW-1267">Proteomics identification</keyword>
<keyword id="KW-1185">Reference proteome</keyword>
<keyword id="KW-0694">RNA-binding</keyword>
<keyword id="KW-0810">Translation regulation</keyword>
<sequence length="224" mass="24441">MALPPAAAPPAGAREPPGSRAAAAAAAPEPPLGLQQLSALQPEPGGVPLHSSWTFWLDRSLPGATAAECASNLKKIYTVQTVQIFWSVYNNIPPVTSLPLRCSYHLMRGERRPLWEEESNAKGGVWKMKVPKDSTSTVWKELLLATIGEQFTDCAAADDEVIGVSVSVRDREDVVQVWNVNASLVGEATVLEKIYELLPHITFKAVFYKPHEEHHAFEGGRGKH</sequence>